<dbReference type="EMBL" id="CR382122">
    <property type="protein sequence ID" value="CAH02170.1"/>
    <property type="molecule type" value="Genomic_DNA"/>
</dbReference>
<dbReference type="RefSeq" id="XP_451777.1">
    <property type="nucleotide sequence ID" value="XM_451777.1"/>
</dbReference>
<dbReference type="FunCoup" id="Q6CWB2">
    <property type="interactions" value="60"/>
</dbReference>
<dbReference type="STRING" id="284590.Q6CWB2"/>
<dbReference type="PaxDb" id="284590-Q6CWB2"/>
<dbReference type="KEGG" id="kla:KLLA0_B05423g"/>
<dbReference type="eggNOG" id="ENOG502SG7B">
    <property type="taxonomic scope" value="Eukaryota"/>
</dbReference>
<dbReference type="HOGENOM" id="CLU_121023_0_0_1"/>
<dbReference type="InParanoid" id="Q6CWB2"/>
<dbReference type="OMA" id="INQRTMS"/>
<dbReference type="Proteomes" id="UP000000598">
    <property type="component" value="Chromosome B"/>
</dbReference>
<dbReference type="GO" id="GO:0005737">
    <property type="term" value="C:cytoplasm"/>
    <property type="evidence" value="ECO:0007669"/>
    <property type="project" value="UniProtKB-SubCell"/>
</dbReference>
<dbReference type="GO" id="GO:0005634">
    <property type="term" value="C:nucleus"/>
    <property type="evidence" value="ECO:0007669"/>
    <property type="project" value="UniProtKB-SubCell"/>
</dbReference>
<dbReference type="GO" id="GO:1990846">
    <property type="term" value="F:ribonucleoside-diphosphate reductase inhibitor activity"/>
    <property type="evidence" value="ECO:0007669"/>
    <property type="project" value="TreeGrafter"/>
</dbReference>
<dbReference type="GO" id="GO:0008104">
    <property type="term" value="P:protein localization"/>
    <property type="evidence" value="ECO:0007669"/>
    <property type="project" value="TreeGrafter"/>
</dbReference>
<dbReference type="InterPro" id="IPR013900">
    <property type="entry name" value="RNR_inhibitor"/>
</dbReference>
<dbReference type="PANTHER" id="PTHR28081:SF1">
    <property type="entry name" value="DAMAGE-REGULATED IMPORT FACILITATOR 1"/>
    <property type="match status" value="1"/>
</dbReference>
<dbReference type="PANTHER" id="PTHR28081">
    <property type="entry name" value="DAMAGE-REGULATED IMPORT FACILITATOR 1-RELATED"/>
    <property type="match status" value="1"/>
</dbReference>
<dbReference type="Pfam" id="PF08591">
    <property type="entry name" value="RNR_inhib"/>
    <property type="match status" value="1"/>
</dbReference>
<keyword id="KW-0963">Cytoplasm</keyword>
<keyword id="KW-0539">Nucleus</keyword>
<keyword id="KW-1185">Reference proteome</keyword>
<proteinExistence type="inferred from homology"/>
<comment type="function">
    <text evidence="1">Mediates the nuclear localization of the ribonucleotide reductase.</text>
</comment>
<comment type="subcellular location">
    <subcellularLocation>
        <location evidence="1">Cytoplasm</location>
    </subcellularLocation>
    <subcellularLocation>
        <location evidence="1">Nucleus</location>
    </subcellularLocation>
</comment>
<comment type="similarity">
    <text evidence="2">Belongs to the DIF1/spd1 family.</text>
</comment>
<name>DIF1_KLULA</name>
<evidence type="ECO:0000250" key="1"/>
<evidence type="ECO:0000305" key="2"/>
<accession>Q6CWB2</accession>
<protein>
    <recommendedName>
        <fullName>Damage-regulated import facilitator 1</fullName>
    </recommendedName>
</protein>
<organism>
    <name type="scientific">Kluyveromyces lactis (strain ATCC 8585 / CBS 2359 / DSM 70799 / NBRC 1267 / NRRL Y-1140 / WM37)</name>
    <name type="common">Yeast</name>
    <name type="synonym">Candida sphaerica</name>
    <dbReference type="NCBI Taxonomy" id="284590"/>
    <lineage>
        <taxon>Eukaryota</taxon>
        <taxon>Fungi</taxon>
        <taxon>Dikarya</taxon>
        <taxon>Ascomycota</taxon>
        <taxon>Saccharomycotina</taxon>
        <taxon>Saccharomycetes</taxon>
        <taxon>Saccharomycetales</taxon>
        <taxon>Saccharomycetaceae</taxon>
        <taxon>Kluyveromyces</taxon>
    </lineage>
</organism>
<feature type="chain" id="PRO_0000399012" description="Damage-regulated import facilitator 1">
    <location>
        <begin position="1"/>
        <end position="158"/>
    </location>
</feature>
<reference key="1">
    <citation type="journal article" date="2004" name="Nature">
        <title>Genome evolution in yeasts.</title>
        <authorList>
            <person name="Dujon B."/>
            <person name="Sherman D."/>
            <person name="Fischer G."/>
            <person name="Durrens P."/>
            <person name="Casaregola S."/>
            <person name="Lafontaine I."/>
            <person name="de Montigny J."/>
            <person name="Marck C."/>
            <person name="Neuveglise C."/>
            <person name="Talla E."/>
            <person name="Goffard N."/>
            <person name="Frangeul L."/>
            <person name="Aigle M."/>
            <person name="Anthouard V."/>
            <person name="Babour A."/>
            <person name="Barbe V."/>
            <person name="Barnay S."/>
            <person name="Blanchin S."/>
            <person name="Beckerich J.-M."/>
            <person name="Beyne E."/>
            <person name="Bleykasten C."/>
            <person name="Boisrame A."/>
            <person name="Boyer J."/>
            <person name="Cattolico L."/>
            <person name="Confanioleri F."/>
            <person name="de Daruvar A."/>
            <person name="Despons L."/>
            <person name="Fabre E."/>
            <person name="Fairhead C."/>
            <person name="Ferry-Dumazet H."/>
            <person name="Groppi A."/>
            <person name="Hantraye F."/>
            <person name="Hennequin C."/>
            <person name="Jauniaux N."/>
            <person name="Joyet P."/>
            <person name="Kachouri R."/>
            <person name="Kerrest A."/>
            <person name="Koszul R."/>
            <person name="Lemaire M."/>
            <person name="Lesur I."/>
            <person name="Ma L."/>
            <person name="Muller H."/>
            <person name="Nicaud J.-M."/>
            <person name="Nikolski M."/>
            <person name="Oztas S."/>
            <person name="Ozier-Kalogeropoulos O."/>
            <person name="Pellenz S."/>
            <person name="Potier S."/>
            <person name="Richard G.-F."/>
            <person name="Straub M.-L."/>
            <person name="Suleau A."/>
            <person name="Swennen D."/>
            <person name="Tekaia F."/>
            <person name="Wesolowski-Louvel M."/>
            <person name="Westhof E."/>
            <person name="Wirth B."/>
            <person name="Zeniou-Meyer M."/>
            <person name="Zivanovic Y."/>
            <person name="Bolotin-Fukuhara M."/>
            <person name="Thierry A."/>
            <person name="Bouchier C."/>
            <person name="Caudron B."/>
            <person name="Scarpelli C."/>
            <person name="Gaillardin C."/>
            <person name="Weissenbach J."/>
            <person name="Wincker P."/>
            <person name="Souciet J.-L."/>
        </authorList>
    </citation>
    <scope>NUCLEOTIDE SEQUENCE [LARGE SCALE GENOMIC DNA]</scope>
    <source>
        <strain>ATCC 8585 / CBS 2359 / DSM 70799 / NBRC 1267 / NRRL Y-1140 / WM37</strain>
    </source>
</reference>
<gene>
    <name type="primary">DIF1</name>
    <name type="ordered locus">KLLA0B05423g</name>
</gene>
<sequence length="158" mass="17429">MTVSSQSPVKKQLHNAIQPSNGQYEYHDKLSTLGMRIRQAVDNGYQGVSVHNTANNTIAATSGSNGSNSSINGAGFSNICVQDNTRFTIPEYKRVALAKQPPMLVNQRTVSMNSNLEQWEQNLDQRLSSIDDDIMRNKLGASDFLSGASKRSFDDLEF</sequence>